<sequence length="411" mass="45856">MQTSEREGSGPELSPSVMPEAPLESPPFPTKSPAFDLFNLVLSYKRLEIYLEPLKDAGDGVRYLLRWQMPLCSLLTCLGLNVLFLTLNEGAWYSVGALMISVPALLGYLQEVCRARLPESELMRRKYHSVRQEDLQRVRLSRPEAVAEVKSFLIQLEAFLSRLCCTCEAAYRVLHWENPVVSSQFYGALLGTICMLYLLPLCWVLTLLNSTLFLGNVEFFRVVSEYRASLQQRMNPKQEEHAFESPPPPDVGGKGGLMDSTPALTPTEDLTPGSVEEAEEAEPDEEFKDAIEETHLVVLEDDEGAPCPAEDELALQDNGFLSKNEVLRSKVSRLTERLRKRYPTNNFGNCTGCSATFSVLKKRRSCSNCGNSFCSRCCSFKVPKSSMGATAPEAQRETVFVCASCNQTLSK</sequence>
<proteinExistence type="evidence at transcript level"/>
<organism>
    <name type="scientific">Pongo abelii</name>
    <name type="common">Sumatran orangutan</name>
    <name type="synonym">Pongo pygmaeus abelii</name>
    <dbReference type="NCBI Taxonomy" id="9601"/>
    <lineage>
        <taxon>Eukaryota</taxon>
        <taxon>Metazoa</taxon>
        <taxon>Chordata</taxon>
        <taxon>Craniata</taxon>
        <taxon>Vertebrata</taxon>
        <taxon>Euteleostomi</taxon>
        <taxon>Mammalia</taxon>
        <taxon>Eutheria</taxon>
        <taxon>Euarchontoglires</taxon>
        <taxon>Primates</taxon>
        <taxon>Haplorrhini</taxon>
        <taxon>Catarrhini</taxon>
        <taxon>Hominidae</taxon>
        <taxon>Pongo</taxon>
    </lineage>
</organism>
<name>ZFY27_PONAB</name>
<keyword id="KW-1003">Cell membrane</keyword>
<keyword id="KW-0966">Cell projection</keyword>
<keyword id="KW-0256">Endoplasmic reticulum</keyword>
<keyword id="KW-0967">Endosome</keyword>
<keyword id="KW-0472">Membrane</keyword>
<keyword id="KW-0479">Metal-binding</keyword>
<keyword id="KW-0597">Phosphoprotein</keyword>
<keyword id="KW-1185">Reference proteome</keyword>
<keyword id="KW-0812">Transmembrane</keyword>
<keyword id="KW-1133">Transmembrane helix</keyword>
<keyword id="KW-0862">Zinc</keyword>
<keyword id="KW-0863">Zinc-finger</keyword>
<evidence type="ECO:0000250" key="1"/>
<evidence type="ECO:0000250" key="2">
    <source>
        <dbReference type="UniProtKB" id="Q3TXX3"/>
    </source>
</evidence>
<evidence type="ECO:0000250" key="3">
    <source>
        <dbReference type="UniProtKB" id="Q5T4F4"/>
    </source>
</evidence>
<evidence type="ECO:0000250" key="4">
    <source>
        <dbReference type="UniProtKB" id="Q6P7B7"/>
    </source>
</evidence>
<evidence type="ECO:0000255" key="5"/>
<evidence type="ECO:0000255" key="6">
    <source>
        <dbReference type="PROSITE-ProRule" id="PRU00091"/>
    </source>
</evidence>
<evidence type="ECO:0000256" key="7">
    <source>
        <dbReference type="SAM" id="MobiDB-lite"/>
    </source>
</evidence>
<accession>Q5R7K2</accession>
<dbReference type="EMBL" id="CR860113">
    <property type="protein sequence ID" value="CAH92258.1"/>
    <property type="molecule type" value="mRNA"/>
</dbReference>
<dbReference type="RefSeq" id="NP_001126322.1">
    <property type="nucleotide sequence ID" value="NM_001132850.1"/>
</dbReference>
<dbReference type="BMRB" id="Q5R7K2"/>
<dbReference type="SMR" id="Q5R7K2"/>
<dbReference type="FunCoup" id="Q5R7K2">
    <property type="interactions" value="1525"/>
</dbReference>
<dbReference type="STRING" id="9601.ENSPPYP00000002949"/>
<dbReference type="GeneID" id="100173301"/>
<dbReference type="KEGG" id="pon:100173301"/>
<dbReference type="CTD" id="118813"/>
<dbReference type="eggNOG" id="ENOG502QVKC">
    <property type="taxonomic scope" value="Eukaryota"/>
</dbReference>
<dbReference type="InParanoid" id="Q5R7K2"/>
<dbReference type="OrthoDB" id="5975347at2759"/>
<dbReference type="Proteomes" id="UP000001595">
    <property type="component" value="Unplaced"/>
</dbReference>
<dbReference type="GO" id="GO:0030424">
    <property type="term" value="C:axon"/>
    <property type="evidence" value="ECO:0000250"/>
    <property type="project" value="UniProtKB"/>
</dbReference>
<dbReference type="GO" id="GO:0030425">
    <property type="term" value="C:dendrite"/>
    <property type="evidence" value="ECO:0000250"/>
    <property type="project" value="UniProtKB"/>
</dbReference>
<dbReference type="GO" id="GO:0005783">
    <property type="term" value="C:endoplasmic reticulum"/>
    <property type="evidence" value="ECO:0000250"/>
    <property type="project" value="UniProtKB"/>
</dbReference>
<dbReference type="GO" id="GO:0005789">
    <property type="term" value="C:endoplasmic reticulum membrane"/>
    <property type="evidence" value="ECO:0000250"/>
    <property type="project" value="UniProtKB"/>
</dbReference>
<dbReference type="GO" id="GO:0071782">
    <property type="term" value="C:endoplasmic reticulum tubular network"/>
    <property type="evidence" value="ECO:0000250"/>
    <property type="project" value="UniProtKB"/>
</dbReference>
<dbReference type="GO" id="GO:0032584">
    <property type="term" value="C:growth cone membrane"/>
    <property type="evidence" value="ECO:0000250"/>
    <property type="project" value="UniProtKB"/>
</dbReference>
<dbReference type="GO" id="GO:0016020">
    <property type="term" value="C:membrane"/>
    <property type="evidence" value="ECO:0000250"/>
    <property type="project" value="UniProtKB"/>
</dbReference>
<dbReference type="GO" id="GO:0055038">
    <property type="term" value="C:recycling endosome membrane"/>
    <property type="evidence" value="ECO:0000250"/>
    <property type="project" value="UniProtKB"/>
</dbReference>
<dbReference type="GO" id="GO:0008270">
    <property type="term" value="F:zinc ion binding"/>
    <property type="evidence" value="ECO:0007669"/>
    <property type="project" value="UniProtKB-KW"/>
</dbReference>
<dbReference type="GO" id="GO:0071787">
    <property type="term" value="P:endoplasmic reticulum tubular network formation"/>
    <property type="evidence" value="ECO:0000250"/>
    <property type="project" value="UniProtKB"/>
</dbReference>
<dbReference type="GO" id="GO:0031175">
    <property type="term" value="P:neuron projection development"/>
    <property type="evidence" value="ECO:0000250"/>
    <property type="project" value="UniProtKB"/>
</dbReference>
<dbReference type="GO" id="GO:0048011">
    <property type="term" value="P:neurotrophin TRK receptor signaling pathway"/>
    <property type="evidence" value="ECO:0000250"/>
    <property type="project" value="UniProtKB"/>
</dbReference>
<dbReference type="GO" id="GO:0045773">
    <property type="term" value="P:positive regulation of axon extension"/>
    <property type="evidence" value="ECO:0000250"/>
    <property type="project" value="UniProtKB"/>
</dbReference>
<dbReference type="GO" id="GO:0072659">
    <property type="term" value="P:protein localization to plasma membrane"/>
    <property type="evidence" value="ECO:0000250"/>
    <property type="project" value="UniProtKB"/>
</dbReference>
<dbReference type="GO" id="GO:0016192">
    <property type="term" value="P:vesicle-mediated transport"/>
    <property type="evidence" value="ECO:0000250"/>
    <property type="project" value="UniProtKB"/>
</dbReference>
<dbReference type="CDD" id="cd15723">
    <property type="entry name" value="FYVE_protrudin"/>
    <property type="match status" value="1"/>
</dbReference>
<dbReference type="FunFam" id="3.30.40.10:FF:000102">
    <property type="entry name" value="protrudin isoform X2"/>
    <property type="match status" value="1"/>
</dbReference>
<dbReference type="Gene3D" id="3.30.40.10">
    <property type="entry name" value="Zinc/RING finger domain, C3HC4 (zinc finger)"/>
    <property type="match status" value="1"/>
</dbReference>
<dbReference type="InterPro" id="IPR042405">
    <property type="entry name" value="Protrudin"/>
</dbReference>
<dbReference type="InterPro" id="IPR000306">
    <property type="entry name" value="Znf_FYVE"/>
</dbReference>
<dbReference type="InterPro" id="IPR017455">
    <property type="entry name" value="Znf_FYVE-rel"/>
</dbReference>
<dbReference type="InterPro" id="IPR011011">
    <property type="entry name" value="Znf_FYVE_PHD"/>
</dbReference>
<dbReference type="InterPro" id="IPR013083">
    <property type="entry name" value="Znf_RING/FYVE/PHD"/>
</dbReference>
<dbReference type="PANTHER" id="PTHR14543">
    <property type="entry name" value="PROTRUDIN"/>
    <property type="match status" value="1"/>
</dbReference>
<dbReference type="PANTHER" id="PTHR14543:SF1">
    <property type="entry name" value="PROTRUDIN"/>
    <property type="match status" value="1"/>
</dbReference>
<dbReference type="Pfam" id="PF01363">
    <property type="entry name" value="FYVE"/>
    <property type="match status" value="1"/>
</dbReference>
<dbReference type="SMART" id="SM00064">
    <property type="entry name" value="FYVE"/>
    <property type="match status" value="1"/>
</dbReference>
<dbReference type="SUPFAM" id="SSF57903">
    <property type="entry name" value="FYVE/PHD zinc finger"/>
    <property type="match status" value="1"/>
</dbReference>
<dbReference type="PROSITE" id="PS50178">
    <property type="entry name" value="ZF_FYVE"/>
    <property type="match status" value="1"/>
</dbReference>
<protein>
    <recommendedName>
        <fullName>Protrudin</fullName>
    </recommendedName>
    <alternativeName>
        <fullName>Zinc finger FYVE domain-containing protein 27</fullName>
    </alternativeName>
</protein>
<comment type="function">
    <text evidence="2 3">Key regulator of RAB11-dependent vesicular trafficking during neurite extension through polarized membrane transport. Promotes axonal elongation and contributes to the establishment of neuronal cell polarity. Involved in nerve growth factor-induced neurite formation in VAPA-dependent manner. Contributes to both the formation and stabilization of the tubular ER network. Involved in ER morphogenesis by regulating the sheet-to-tubule balance and possibly the density of tubule interconnections. Acts as an adapter protein that facilitates the interaction of KIF5A with VAPA, VAPB, SURF4, RAB11A, RAB11B and RTN3 and the ZFYVE27-KIF5A complex contributes to the transport of these proteins in neurons. Can induce formation of neurite-like membrane protrusions in non-neuronal cells in a KIF5A/B-dependent manner.</text>
</comment>
<comment type="subunit">
    <text evidence="2 3">Can form homooligomers (monomers, dimers and tetramers). Interacts with RAB11A (GDP-bound form); regulates RAB11A. Interacts with FKBP8; may negatively regulate ZFYVE27 phosphorylation. Interacts with VAPA (via MSP domain); may regulate ZFYVE27 retention in the endoplasmic reticulum and its function in cell projections formation. Interacts with VAPB (via MSP domain). Interacts with RAB11B (GDP-bound form), REEP1, REEP5, ATL1, ATL2, ATL3, SPAST, SURF4, KIF5A, KIF5B, KIF5C and RTN3.</text>
</comment>
<comment type="subcellular location">
    <subcellularLocation>
        <location evidence="4">Recycling endosome membrane</location>
        <topology evidence="5">Multi-pass membrane protein</topology>
    </subcellularLocation>
    <subcellularLocation>
        <location evidence="3">Endoplasmic reticulum membrane</location>
        <topology evidence="5">Multi-pass membrane protein</topology>
    </subcellularLocation>
    <subcellularLocation>
        <location evidence="2">Cell projection</location>
        <location evidence="2">Growth cone membrane</location>
        <topology evidence="5">Multi-pass membrane protein</topology>
    </subcellularLocation>
    <text evidence="2 3">Localizes at both dendrites and axons. Localizes to endoplasmic reticulum tubular network.</text>
</comment>
<comment type="PTM">
    <text evidence="1">Phosphorylated. Phosphorylation is induced by NGF through the MAPK/ERK pathway and modulates interaction with RAB11A (By similarity).</text>
</comment>
<gene>
    <name type="primary">ZFYVE27</name>
</gene>
<reference key="1">
    <citation type="submission" date="2004-11" db="EMBL/GenBank/DDBJ databases">
        <authorList>
            <consortium name="The German cDNA consortium"/>
        </authorList>
    </citation>
    <scope>NUCLEOTIDE SEQUENCE [LARGE SCALE MRNA]</scope>
    <source>
        <tissue>Brain cortex</tissue>
    </source>
</reference>
<feature type="chain" id="PRO_0000245603" description="Protrudin">
    <location>
        <begin position="1"/>
        <end position="411"/>
    </location>
</feature>
<feature type="topological domain" description="Cytoplasmic" evidence="3">
    <location>
        <begin position="1"/>
        <end position="66"/>
    </location>
</feature>
<feature type="transmembrane region" description="Helical" evidence="5">
    <location>
        <begin position="67"/>
        <end position="87"/>
    </location>
</feature>
<feature type="topological domain" description="Lumenal" evidence="3">
    <location>
        <position position="88"/>
    </location>
</feature>
<feature type="transmembrane region" description="Helical" evidence="5">
    <location>
        <begin position="89"/>
        <end position="109"/>
    </location>
</feature>
<feature type="topological domain" description="Cytoplasmic" evidence="3">
    <location>
        <begin position="110"/>
        <end position="187"/>
    </location>
</feature>
<feature type="intramembrane region" description="Helical" evidence="5">
    <location>
        <begin position="188"/>
        <end position="208"/>
    </location>
</feature>
<feature type="topological domain" description="Cytoplasmic" evidence="3">
    <location>
        <begin position="209"/>
        <end position="411"/>
    </location>
</feature>
<feature type="zinc finger region" description="FYVE-type" evidence="6">
    <location>
        <begin position="344"/>
        <end position="410"/>
    </location>
</feature>
<feature type="region of interest" description="Sufficient for localization to endoplasmic reticulum tubular network and for interactions with REEP1, REEP5, ATL1, ATL2, ATL3 and SPAST" evidence="3">
    <location>
        <begin position="1"/>
        <end position="205"/>
    </location>
</feature>
<feature type="region of interest" description="Sufficient for homooligomerization" evidence="3">
    <location>
        <begin position="1"/>
        <end position="92"/>
    </location>
</feature>
<feature type="region of interest" description="Disordered" evidence="7">
    <location>
        <begin position="1"/>
        <end position="27"/>
    </location>
</feature>
<feature type="region of interest" description="Necessary for interaction with RAB11A and function in neurite outgrowth" evidence="1">
    <location>
        <begin position="51"/>
        <end position="64"/>
    </location>
</feature>
<feature type="region of interest" description="Disordered" evidence="7">
    <location>
        <begin position="234"/>
        <end position="286"/>
    </location>
</feature>
<feature type="region of interest" description="Necessary for interaction with KIF5A" evidence="3">
    <location>
        <begin position="271"/>
        <end position="361"/>
    </location>
</feature>
<feature type="region of interest" description="Necessary for interaction with VAPA" evidence="1">
    <location>
        <begin position="286"/>
        <end position="292"/>
    </location>
</feature>
<feature type="compositionally biased region" description="Acidic residues" evidence="7">
    <location>
        <begin position="276"/>
        <end position="286"/>
    </location>
</feature>
<feature type="binding site" evidence="6">
    <location>
        <position position="350"/>
    </location>
    <ligand>
        <name>Zn(2+)</name>
        <dbReference type="ChEBI" id="CHEBI:29105"/>
        <label>1</label>
    </ligand>
</feature>
<feature type="binding site" evidence="6">
    <location>
        <position position="353"/>
    </location>
    <ligand>
        <name>Zn(2+)</name>
        <dbReference type="ChEBI" id="CHEBI:29105"/>
        <label>1</label>
    </ligand>
</feature>
<feature type="binding site" evidence="6">
    <location>
        <position position="366"/>
    </location>
    <ligand>
        <name>Zn(2+)</name>
        <dbReference type="ChEBI" id="CHEBI:29105"/>
        <label>2</label>
    </ligand>
</feature>
<feature type="binding site" evidence="6">
    <location>
        <position position="369"/>
    </location>
    <ligand>
        <name>Zn(2+)</name>
        <dbReference type="ChEBI" id="CHEBI:29105"/>
        <label>2</label>
    </ligand>
</feature>
<feature type="binding site" evidence="6">
    <location>
        <position position="374"/>
    </location>
    <ligand>
        <name>Zn(2+)</name>
        <dbReference type="ChEBI" id="CHEBI:29105"/>
        <label>1</label>
    </ligand>
</feature>
<feature type="binding site" evidence="6">
    <location>
        <position position="377"/>
    </location>
    <ligand>
        <name>Zn(2+)</name>
        <dbReference type="ChEBI" id="CHEBI:29105"/>
        <label>1</label>
    </ligand>
</feature>
<feature type="binding site" evidence="6">
    <location>
        <position position="402"/>
    </location>
    <ligand>
        <name>Zn(2+)</name>
        <dbReference type="ChEBI" id="CHEBI:29105"/>
        <label>2</label>
    </ligand>
</feature>
<feature type="binding site" evidence="6">
    <location>
        <position position="405"/>
    </location>
    <ligand>
        <name>Zn(2+)</name>
        <dbReference type="ChEBI" id="CHEBI:29105"/>
        <label>2</label>
    </ligand>
</feature>